<dbReference type="EMBL" id="Z49808">
    <property type="protein sequence ID" value="CAA89918.1"/>
    <property type="molecule type" value="Genomic_DNA"/>
</dbReference>
<dbReference type="EMBL" id="U20349">
    <property type="protein sequence ID" value="AAA87904.1"/>
    <property type="status" value="ALT_INIT"/>
    <property type="molecule type" value="Genomic_DNA"/>
</dbReference>
<dbReference type="EMBL" id="BK006946">
    <property type="protein sequence ID" value="DAA10083.1"/>
    <property type="molecule type" value="Genomic_DNA"/>
</dbReference>
<dbReference type="PIR" id="S55132">
    <property type="entry name" value="S55132"/>
</dbReference>
<dbReference type="RefSeq" id="NP_013910.1">
    <property type="nucleotide sequence ID" value="NM_001182691.1"/>
</dbReference>
<dbReference type="SMR" id="Q12751"/>
<dbReference type="BioGRID" id="35363">
    <property type="interactions" value="24"/>
</dbReference>
<dbReference type="FunCoup" id="Q12751">
    <property type="interactions" value="134"/>
</dbReference>
<dbReference type="IntAct" id="Q12751">
    <property type="interactions" value="1"/>
</dbReference>
<dbReference type="STRING" id="4932.YMR185W"/>
<dbReference type="GlyGen" id="Q12751">
    <property type="glycosylation" value="1 site"/>
</dbReference>
<dbReference type="iPTMnet" id="Q12751"/>
<dbReference type="PaxDb" id="4932-YMR185W"/>
<dbReference type="PeptideAtlas" id="Q12751"/>
<dbReference type="EnsemblFungi" id="YMR185W_mRNA">
    <property type="protein sequence ID" value="YMR185W"/>
    <property type="gene ID" value="YMR185W"/>
</dbReference>
<dbReference type="GeneID" id="855223"/>
<dbReference type="KEGG" id="sce:YMR185W"/>
<dbReference type="AGR" id="SGD:S000004797"/>
<dbReference type="SGD" id="S000004797">
    <property type="gene designation" value="RTP1"/>
</dbReference>
<dbReference type="VEuPathDB" id="FungiDB:YMR185W"/>
<dbReference type="eggNOG" id="KOG4653">
    <property type="taxonomic scope" value="Eukaryota"/>
</dbReference>
<dbReference type="GeneTree" id="ENSGT00390000010938"/>
<dbReference type="HOGENOM" id="CLU_006300_1_0_1"/>
<dbReference type="InParanoid" id="Q12751"/>
<dbReference type="OMA" id="KRAYGAP"/>
<dbReference type="OrthoDB" id="39591at2759"/>
<dbReference type="BioCyc" id="YEAST:G3O-32873-MONOMER"/>
<dbReference type="BioGRID-ORCS" id="855223">
    <property type="hits" value="2 hits in 10 CRISPR screens"/>
</dbReference>
<dbReference type="PRO" id="PR:Q12751"/>
<dbReference type="Proteomes" id="UP000002311">
    <property type="component" value="Chromosome XIII"/>
</dbReference>
<dbReference type="RNAct" id="Q12751">
    <property type="molecule type" value="protein"/>
</dbReference>
<dbReference type="GO" id="GO:0005737">
    <property type="term" value="C:cytoplasm"/>
    <property type="evidence" value="ECO:0000314"/>
    <property type="project" value="SGD"/>
</dbReference>
<dbReference type="GO" id="GO:0006606">
    <property type="term" value="P:protein import into nucleus"/>
    <property type="evidence" value="ECO:0000315"/>
    <property type="project" value="CACAO"/>
</dbReference>
<dbReference type="GO" id="GO:0009306">
    <property type="term" value="P:protein secretion"/>
    <property type="evidence" value="ECO:0000318"/>
    <property type="project" value="GO_Central"/>
</dbReference>
<dbReference type="InterPro" id="IPR016024">
    <property type="entry name" value="ARM-type_fold"/>
</dbReference>
<dbReference type="InterPro" id="IPR019451">
    <property type="entry name" value="Rtp1_C1"/>
</dbReference>
<dbReference type="InterPro" id="IPR019414">
    <property type="entry name" value="Rtp1_C2"/>
</dbReference>
<dbReference type="InterPro" id="IPR039600">
    <property type="entry name" value="TANGO6/Rtp1"/>
</dbReference>
<dbReference type="PANTHER" id="PTHR20959">
    <property type="entry name" value="TRANSPORT AND GOLGI ORGANIZATION PROTEIN 6 FAMILY MEMBER"/>
    <property type="match status" value="1"/>
</dbReference>
<dbReference type="PANTHER" id="PTHR20959:SF1">
    <property type="entry name" value="TRANSPORT AND GOLGI ORGANIZATION PROTEIN 6 HOMOLOG"/>
    <property type="match status" value="1"/>
</dbReference>
<dbReference type="Pfam" id="PF10363">
    <property type="entry name" value="RTP1_C1"/>
    <property type="match status" value="1"/>
</dbReference>
<dbReference type="Pfam" id="PF10304">
    <property type="entry name" value="RTP1_C2"/>
    <property type="match status" value="1"/>
</dbReference>
<dbReference type="SUPFAM" id="SSF48371">
    <property type="entry name" value="ARM repeat"/>
    <property type="match status" value="1"/>
</dbReference>
<organism>
    <name type="scientific">Saccharomyces cerevisiae (strain ATCC 204508 / S288c)</name>
    <name type="common">Baker's yeast</name>
    <dbReference type="NCBI Taxonomy" id="559292"/>
    <lineage>
        <taxon>Eukaryota</taxon>
        <taxon>Fungi</taxon>
        <taxon>Dikarya</taxon>
        <taxon>Ascomycota</taxon>
        <taxon>Saccharomycotina</taxon>
        <taxon>Saccharomycetes</taxon>
        <taxon>Saccharomycetales</taxon>
        <taxon>Saccharomycetaceae</taxon>
        <taxon>Saccharomyces</taxon>
    </lineage>
</organism>
<evidence type="ECO:0000250" key="1">
    <source>
        <dbReference type="UniProtKB" id="Q9VJ29"/>
    </source>
</evidence>
<evidence type="ECO:0000255" key="2"/>
<evidence type="ECO:0000256" key="3">
    <source>
        <dbReference type="SAM" id="MobiDB-lite"/>
    </source>
</evidence>
<evidence type="ECO:0000269" key="4">
    <source>
    </source>
</evidence>
<evidence type="ECO:0000303" key="5">
    <source>
    </source>
</evidence>
<evidence type="ECO:0000305" key="6"/>
<evidence type="ECO:0000305" key="7">
    <source>
    </source>
</evidence>
<evidence type="ECO:0000312" key="8">
    <source>
        <dbReference type="SGD" id="S000004797"/>
    </source>
</evidence>
<proteinExistence type="evidence at protein level"/>
<accession>Q12751</accession>
<accession>D6W009</accession>
<name>RTP1_YEAST</name>
<keyword id="KW-0963">Cytoplasm</keyword>
<keyword id="KW-1185">Reference proteome</keyword>
<keyword id="KW-0677">Repeat</keyword>
<protein>
    <recommendedName>
        <fullName evidence="7">RNA polymerase II assembly factor RTP1</fullName>
    </recommendedName>
    <alternativeName>
        <fullName evidence="5">Required for nuclear transport of RNA pol II protein 1</fullName>
    </alternativeName>
    <alternativeName>
        <fullName evidence="1">Transport and Golgi organization protein 6 homolog</fullName>
    </alternativeName>
</protein>
<gene>
    <name evidence="5" type="primary">RTP1</name>
    <name evidence="8" type="ordered locus">YMR185W</name>
    <name type="ORF">YM8010.15</name>
</gene>
<reference key="1">
    <citation type="journal article" date="1997" name="Nature">
        <title>The nucleotide sequence of Saccharomyces cerevisiae chromosome XIII.</title>
        <authorList>
            <person name="Bowman S."/>
            <person name="Churcher C.M."/>
            <person name="Badcock K."/>
            <person name="Brown D."/>
            <person name="Chillingworth T."/>
            <person name="Connor R."/>
            <person name="Dedman K."/>
            <person name="Devlin K."/>
            <person name="Gentles S."/>
            <person name="Hamlin N."/>
            <person name="Hunt S."/>
            <person name="Jagels K."/>
            <person name="Lye G."/>
            <person name="Moule S."/>
            <person name="Odell C."/>
            <person name="Pearson D."/>
            <person name="Rajandream M.A."/>
            <person name="Rice P."/>
            <person name="Skelton J."/>
            <person name="Walsh S.V."/>
            <person name="Whitehead S."/>
            <person name="Barrell B.G."/>
        </authorList>
    </citation>
    <scope>NUCLEOTIDE SEQUENCE [LARGE SCALE GENOMIC DNA]</scope>
    <source>
        <strain>ATCC 204508 / S288c</strain>
    </source>
</reference>
<reference key="2">
    <citation type="journal article" date="2014" name="G3 (Bethesda)">
        <title>The reference genome sequence of Saccharomyces cerevisiae: Then and now.</title>
        <authorList>
            <person name="Engel S.R."/>
            <person name="Dietrich F.S."/>
            <person name="Fisk D.G."/>
            <person name="Binkley G."/>
            <person name="Balakrishnan R."/>
            <person name="Costanzo M.C."/>
            <person name="Dwight S.S."/>
            <person name="Hitz B.C."/>
            <person name="Karra K."/>
            <person name="Nash R.S."/>
            <person name="Weng S."/>
            <person name="Wong E.D."/>
            <person name="Lloyd P."/>
            <person name="Skrzypek M.S."/>
            <person name="Miyasato S.R."/>
            <person name="Simison M."/>
            <person name="Cherry J.M."/>
        </authorList>
    </citation>
    <scope>GENOME REANNOTATION</scope>
    <source>
        <strain>ATCC 204508 / S288c</strain>
    </source>
</reference>
<reference key="3">
    <citation type="journal article" date="1995" name="Yeast">
        <title>The upstream sequences of the HSP82 and HSC82 genes of Saccharomyces cerevisiae: regulatory elements and nucleosome positioning motifs.</title>
        <authorList>
            <person name="Erkine A.M."/>
            <person name="Szent-Gyorgyi C."/>
            <person name="Simmons S.F."/>
            <person name="Gross D.S."/>
        </authorList>
    </citation>
    <scope>NUCLEOTIDE SEQUENCE [GENOMIC DNA] OF 650-981</scope>
</reference>
<reference key="4">
    <citation type="journal article" date="1989" name="Mol. Cell. Biol.">
        <title>hsp82 is an essential protein that is required in higher concentrations for growth of cells at higher temperatures.</title>
        <authorList>
            <person name="Borkovich K.A."/>
            <person name="Farrelly F.W."/>
            <person name="Finkelstein D.B."/>
            <person name="Taulien J."/>
            <person name="Lindquist S."/>
        </authorList>
    </citation>
    <scope>NUCLEOTIDE SEQUENCE [GENOMIC DNA] OF 976-981</scope>
</reference>
<reference key="5">
    <citation type="journal article" date="2013" name="Mol. Cell. Biol.">
        <title>Rtp1p is a karyopherin-like protein required for RNA polymerase II biogenesis.</title>
        <authorList>
            <person name="Gomez-Navarro N."/>
            <person name="Peiro-Chova L."/>
            <person name="Rodriguez-Navarro S."/>
            <person name="Polaina J."/>
            <person name="Estruch F."/>
        </authorList>
    </citation>
    <scope>FUNCTION</scope>
    <scope>SUBCELLULAR LOCATION</scope>
    <scope>INTERACTION WITH NUP100; NUP116; RPB2;RPB3 AND THE R2TP COMPLEX</scope>
</reference>
<comment type="function">
    <text evidence="4">Required for the cytoplasmic assembly and the nuclear import of RNA polymerase II. May facilitate the starting interaction between RNA polymerase II subunits RPB2 and RPB3 and the subsequent interaction of the resulting complex with subunit RPB1. May also participate in the transport of RNA polymerase II through the nuclear pore complex.</text>
</comment>
<comment type="subunit">
    <text evidence="4">Interacts with RNA polymerase II subunits RPB2 and RPB3. Interacts with the R2TP complex. Interacts with the nuclear pore complex subunits NUP100 and NUP116.</text>
</comment>
<comment type="subcellular location">
    <subcellularLocation>
        <location evidence="4">Cytoplasm</location>
    </subcellularLocation>
</comment>
<comment type="similarity">
    <text evidence="6">Belongs to the Tango6 family.</text>
</comment>
<comment type="sequence caution" evidence="6">
    <conflict type="erroneous initiation">
        <sequence resource="EMBL-CDS" id="AAA87904"/>
    </conflict>
    <text>Truncated N-terminus.</text>
</comment>
<feature type="chain" id="PRO_0000203322" description="RNA polymerase II assembly factor RTP1">
    <location>
        <begin position="1"/>
        <end position="981"/>
    </location>
</feature>
<feature type="repeat" description="HEAT 1" evidence="2">
    <location>
        <begin position="64"/>
        <end position="101"/>
    </location>
</feature>
<feature type="repeat" description="HEAT 2" evidence="2">
    <location>
        <begin position="161"/>
        <end position="199"/>
    </location>
</feature>
<feature type="repeat" description="HEAT 3" evidence="2">
    <location>
        <begin position="226"/>
        <end position="261"/>
    </location>
</feature>
<feature type="repeat" description="HEAT 4" evidence="2">
    <location>
        <begin position="366"/>
        <end position="403"/>
    </location>
</feature>
<feature type="repeat" description="HEAT 5" evidence="2">
    <location>
        <begin position="609"/>
        <end position="646"/>
    </location>
</feature>
<feature type="repeat" description="HEAT 6" evidence="2">
    <location>
        <begin position="655"/>
        <end position="692"/>
    </location>
</feature>
<feature type="repeat" description="HEAT 7" evidence="2">
    <location>
        <begin position="765"/>
        <end position="799"/>
    </location>
</feature>
<feature type="repeat" description="HEAT 8" evidence="2">
    <location>
        <begin position="800"/>
        <end position="836"/>
    </location>
</feature>
<feature type="repeat" description="HEAT 9" evidence="2">
    <location>
        <begin position="945"/>
        <end position="980"/>
    </location>
</feature>
<feature type="region of interest" description="Disordered" evidence="3">
    <location>
        <begin position="630"/>
        <end position="652"/>
    </location>
</feature>
<feature type="compositionally biased region" description="Acidic residues" evidence="3">
    <location>
        <begin position="630"/>
        <end position="651"/>
    </location>
</feature>
<sequence length="981" mass="113249">MNEDKEQKINIHDILNTRPKLTKKTALDVFFEDLDDNVITPINEYVLDSGSSSSSSIYQALKCSNNNEFVAVLLQKFQNLHIHVLEQQRRLIESKSDLLPISLHDMKYVDELINLLIIHGIDANLSPTMKIPFDSKRINTFKKGQKSAEYETPRWHTINNDTLSQVITVFYNVLTSERSSDYLREIISKGSAYANILLGLIVLHLQLPNRYSSQMITNLEDTQETYTLFGVYTLLVETIQDEKVREPILSKLTTLTLRRPENGLISLIDFVLGVRDAEDIDIEKFNRIYQILMSKPKTMTNLQYLTELFKQIYDGLTFVNRPILVTCLNGLILKFYLRNKRIVNDFLFKKVRSIIFNSPLTDHTAKELNDVINVLISLSKNSSSDLLNDLVTSCPDEDGTTPGQFFLYVWIYALFLKKNQKLDPLEINKLSISDNKSTDSIHFPEQSSSKYYEVVLSLLKSLIVITENFQYLNVLSLNLLNFEHEKWKYLIDLDTQLPYISVKNTDMAELFFEKGSKNSQISEFLQDMDLSIELFMEFLVLLNDEEQSKTLFLDILKRWVHHTKKSEKRSSDNHSGMPSVTDNALILMDLKLLECMNNRFKTKIVNKPKDVLIVIDQLIDVVQEKDETIQEVEADSDDEVEEGEETEELDPNENSSYKIILQLLSTVLSESSSSILLQNSYILKSISRKLQSFNTNASEIDALLASIDNILINGHTTERNDNIEIEMDEERLDKAITSLHDPLVPIKSYGLTELRHLAEKKSPVISLEKVLQIHLDYLKNMDPFIYLNVIKGLTTLCELEPETILPLLAEFYANKKKKNRLDDVLKVGEVFINYIQRQNELFQGKLAYLIIDTCLSIVRPNDSKPLDNRWRMSSMSILGMCLQINARGVSDRIRDMLDCVFGILQLEQPQNHLKDKDDSFLMRRSAVHLIHDLLYSTGFDLLPFEYNYDKLKTLLSYVRDQDEDYMVCEQIDKLLTVLDSL</sequence>